<reference key="1">
    <citation type="journal article" date="2005" name="Nature">
        <title>The genome of the social amoeba Dictyostelium discoideum.</title>
        <authorList>
            <person name="Eichinger L."/>
            <person name="Pachebat J.A."/>
            <person name="Gloeckner G."/>
            <person name="Rajandream M.A."/>
            <person name="Sucgang R."/>
            <person name="Berriman M."/>
            <person name="Song J."/>
            <person name="Olsen R."/>
            <person name="Szafranski K."/>
            <person name="Xu Q."/>
            <person name="Tunggal B."/>
            <person name="Kummerfeld S."/>
            <person name="Madera M."/>
            <person name="Konfortov B.A."/>
            <person name="Rivero F."/>
            <person name="Bankier A.T."/>
            <person name="Lehmann R."/>
            <person name="Hamlin N."/>
            <person name="Davies R."/>
            <person name="Gaudet P."/>
            <person name="Fey P."/>
            <person name="Pilcher K."/>
            <person name="Chen G."/>
            <person name="Saunders D."/>
            <person name="Sodergren E.J."/>
            <person name="Davis P."/>
            <person name="Kerhornou A."/>
            <person name="Nie X."/>
            <person name="Hall N."/>
            <person name="Anjard C."/>
            <person name="Hemphill L."/>
            <person name="Bason N."/>
            <person name="Farbrother P."/>
            <person name="Desany B."/>
            <person name="Just E."/>
            <person name="Morio T."/>
            <person name="Rost R."/>
            <person name="Churcher C.M."/>
            <person name="Cooper J."/>
            <person name="Haydock S."/>
            <person name="van Driessche N."/>
            <person name="Cronin A."/>
            <person name="Goodhead I."/>
            <person name="Muzny D.M."/>
            <person name="Mourier T."/>
            <person name="Pain A."/>
            <person name="Lu M."/>
            <person name="Harper D."/>
            <person name="Lindsay R."/>
            <person name="Hauser H."/>
            <person name="James K.D."/>
            <person name="Quiles M."/>
            <person name="Madan Babu M."/>
            <person name="Saito T."/>
            <person name="Buchrieser C."/>
            <person name="Wardroper A."/>
            <person name="Felder M."/>
            <person name="Thangavelu M."/>
            <person name="Johnson D."/>
            <person name="Knights A."/>
            <person name="Loulseged H."/>
            <person name="Mungall K.L."/>
            <person name="Oliver K."/>
            <person name="Price C."/>
            <person name="Quail M.A."/>
            <person name="Urushihara H."/>
            <person name="Hernandez J."/>
            <person name="Rabbinowitsch E."/>
            <person name="Steffen D."/>
            <person name="Sanders M."/>
            <person name="Ma J."/>
            <person name="Kohara Y."/>
            <person name="Sharp S."/>
            <person name="Simmonds M.N."/>
            <person name="Spiegler S."/>
            <person name="Tivey A."/>
            <person name="Sugano S."/>
            <person name="White B."/>
            <person name="Walker D."/>
            <person name="Woodward J.R."/>
            <person name="Winckler T."/>
            <person name="Tanaka Y."/>
            <person name="Shaulsky G."/>
            <person name="Schleicher M."/>
            <person name="Weinstock G.M."/>
            <person name="Rosenthal A."/>
            <person name="Cox E.C."/>
            <person name="Chisholm R.L."/>
            <person name="Gibbs R.A."/>
            <person name="Loomis W.F."/>
            <person name="Platzer M."/>
            <person name="Kay R.R."/>
            <person name="Williams J.G."/>
            <person name="Dear P.H."/>
            <person name="Noegel A.A."/>
            <person name="Barrell B.G."/>
            <person name="Kuspa A."/>
        </authorList>
    </citation>
    <scope>NUCLEOTIDE SEQUENCE [LARGE SCALE GENOMIC DNA]</scope>
    <source>
        <strain>AX4</strain>
    </source>
</reference>
<proteinExistence type="inferred from homology"/>
<gene>
    <name type="primary">hagh</name>
    <name type="synonym">gloB1</name>
    <name type="ORF">DDB_G0285717</name>
</gene>
<protein>
    <recommendedName>
        <fullName>Hydroxyacylglutathione hydrolase</fullName>
        <ecNumber>3.1.2.6</ecNumber>
    </recommendedName>
    <alternativeName>
        <fullName>Glyoxalase II</fullName>
        <shortName>Glx II</shortName>
    </alternativeName>
    <alternativeName>
        <fullName>Glyoxylase B1</fullName>
    </alternativeName>
</protein>
<feature type="chain" id="PRO_0000328327" description="Hydroxyacylglutathione hydrolase">
    <location>
        <begin position="1"/>
        <end position="268"/>
    </location>
</feature>
<feature type="binding site" evidence="2">
    <location>
        <position position="56"/>
    </location>
    <ligand>
        <name>Zn(2+)</name>
        <dbReference type="ChEBI" id="CHEBI:29105"/>
        <label>1</label>
    </ligand>
</feature>
<feature type="binding site" evidence="2">
    <location>
        <position position="58"/>
    </location>
    <ligand>
        <name>Zn(2+)</name>
        <dbReference type="ChEBI" id="CHEBI:29105"/>
        <label>1</label>
    </ligand>
</feature>
<feature type="binding site" evidence="2">
    <location>
        <position position="60"/>
    </location>
    <ligand>
        <name>Zn(2+)</name>
        <dbReference type="ChEBI" id="CHEBI:29105"/>
        <label>2</label>
    </ligand>
</feature>
<feature type="binding site" evidence="2">
    <location>
        <position position="61"/>
    </location>
    <ligand>
        <name>Zn(2+)</name>
        <dbReference type="ChEBI" id="CHEBI:29105"/>
        <label>2</label>
    </ligand>
</feature>
<feature type="binding site" evidence="2">
    <location>
        <position position="112"/>
    </location>
    <ligand>
        <name>Zn(2+)</name>
        <dbReference type="ChEBI" id="CHEBI:29105"/>
        <label>1</label>
    </ligand>
</feature>
<feature type="binding site" evidence="2">
    <location>
        <position position="137"/>
    </location>
    <ligand>
        <name>Zn(2+)</name>
        <dbReference type="ChEBI" id="CHEBI:29105"/>
        <label>1</label>
    </ligand>
</feature>
<feature type="binding site" evidence="2">
    <location>
        <position position="137"/>
    </location>
    <ligand>
        <name>Zn(2+)</name>
        <dbReference type="ChEBI" id="CHEBI:29105"/>
        <label>2</label>
    </ligand>
</feature>
<feature type="binding site" evidence="2">
    <location>
        <begin position="176"/>
        <end position="178"/>
    </location>
    <ligand>
        <name>substrate</name>
    </ligand>
</feature>
<feature type="binding site" evidence="2">
    <location>
        <position position="176"/>
    </location>
    <ligand>
        <name>Zn(2+)</name>
        <dbReference type="ChEBI" id="CHEBI:29105"/>
        <label>2</label>
    </ligand>
</feature>
<organism>
    <name type="scientific">Dictyostelium discoideum</name>
    <name type="common">Social amoeba</name>
    <dbReference type="NCBI Taxonomy" id="44689"/>
    <lineage>
        <taxon>Eukaryota</taxon>
        <taxon>Amoebozoa</taxon>
        <taxon>Evosea</taxon>
        <taxon>Eumycetozoa</taxon>
        <taxon>Dictyostelia</taxon>
        <taxon>Dictyosteliales</taxon>
        <taxon>Dictyosteliaceae</taxon>
        <taxon>Dictyostelium</taxon>
    </lineage>
</organism>
<keyword id="KW-0378">Hydrolase</keyword>
<keyword id="KW-0479">Metal-binding</keyword>
<keyword id="KW-1185">Reference proteome</keyword>
<keyword id="KW-0862">Zinc</keyword>
<accession>Q54MR1</accession>
<comment type="function">
    <text evidence="1">Thiolesterase that catalyzes the hydrolysis of S-D-lactoyl-glutathione to form glutathione and D-lactic acid.</text>
</comment>
<comment type="catalytic activity">
    <reaction>
        <text>an S-(2-hydroxyacyl)glutathione + H2O = a 2-hydroxy carboxylate + glutathione + H(+)</text>
        <dbReference type="Rhea" id="RHEA:21864"/>
        <dbReference type="ChEBI" id="CHEBI:15377"/>
        <dbReference type="ChEBI" id="CHEBI:15378"/>
        <dbReference type="ChEBI" id="CHEBI:57925"/>
        <dbReference type="ChEBI" id="CHEBI:58896"/>
        <dbReference type="ChEBI" id="CHEBI:71261"/>
        <dbReference type="EC" id="3.1.2.6"/>
    </reaction>
</comment>
<comment type="cofactor">
    <cofactor evidence="2">
        <name>Zn(2+)</name>
        <dbReference type="ChEBI" id="CHEBI:29105"/>
    </cofactor>
    <text evidence="2">Binds 2 Zn(2+) ions per subunit.</text>
</comment>
<comment type="pathway">
    <text>Secondary metabolite metabolism; methylglyoxal degradation; (R)-lactate from methylglyoxal: step 2/2.</text>
</comment>
<comment type="subunit">
    <text evidence="1">Monomer.</text>
</comment>
<comment type="similarity">
    <text evidence="3">Belongs to the metallo-beta-lactamase superfamily. Glyoxalase II family.</text>
</comment>
<name>GLO2_DICDI</name>
<evidence type="ECO:0000250" key="1"/>
<evidence type="ECO:0000250" key="2">
    <source>
        <dbReference type="UniProtKB" id="Q16775"/>
    </source>
</evidence>
<evidence type="ECO:0000305" key="3"/>
<sequence>MKVQPVLVNKDNYSYLVIDEKNKVAIAIDPCEPNKVISSLSSISSDIKINSVFTTHHHWDHAGGNNLIKTIIKDINVYGRDERFEGITKKLENNEVLKIGSLKIKTLDAPAHTSSHVLYLIEDENEPNQVKSLFTGDTLFIGGCGRLFEGNPEQMYNALYNVIGKLPDNTLVYVGHEYTLKNLEFAKTLESENENKELYNFYDQCKEKLANGEFTVPSSIAQEKLINPFMRCHLPSIYNHYLKENPNSINPPSPIDVLGFIRSLKDKF</sequence>
<dbReference type="EC" id="3.1.2.6"/>
<dbReference type="EMBL" id="AAFI02000079">
    <property type="protein sequence ID" value="EAL64696.1"/>
    <property type="molecule type" value="Genomic_DNA"/>
</dbReference>
<dbReference type="RefSeq" id="XP_638232.1">
    <property type="nucleotide sequence ID" value="XM_633140.1"/>
</dbReference>
<dbReference type="SMR" id="Q54MR1"/>
<dbReference type="FunCoup" id="Q54MR1">
    <property type="interactions" value="85"/>
</dbReference>
<dbReference type="STRING" id="44689.Q54MR1"/>
<dbReference type="PaxDb" id="44689-DDB0230988"/>
<dbReference type="EnsemblProtists" id="EAL64696">
    <property type="protein sequence ID" value="EAL64696"/>
    <property type="gene ID" value="DDB_G0285717"/>
</dbReference>
<dbReference type="GeneID" id="8625280"/>
<dbReference type="KEGG" id="ddi:DDB_G0285717"/>
<dbReference type="dictyBase" id="DDB_G0285717">
    <property type="gene designation" value="gloB1"/>
</dbReference>
<dbReference type="VEuPathDB" id="AmoebaDB:DDB_G0285717"/>
<dbReference type="eggNOG" id="KOG0813">
    <property type="taxonomic scope" value="Eukaryota"/>
</dbReference>
<dbReference type="HOGENOM" id="CLU_030571_4_0_1"/>
<dbReference type="InParanoid" id="Q54MR1"/>
<dbReference type="OMA" id="NYIWLLQ"/>
<dbReference type="PhylomeDB" id="Q54MR1"/>
<dbReference type="Reactome" id="R-DDI-70268">
    <property type="pathway name" value="Pyruvate metabolism"/>
</dbReference>
<dbReference type="UniPathway" id="UPA00619">
    <property type="reaction ID" value="UER00676"/>
</dbReference>
<dbReference type="PRO" id="PR:Q54MR1"/>
<dbReference type="Proteomes" id="UP000002195">
    <property type="component" value="Chromosome 4"/>
</dbReference>
<dbReference type="GO" id="GO:0004416">
    <property type="term" value="F:hydroxyacylglutathione hydrolase activity"/>
    <property type="evidence" value="ECO:0000250"/>
    <property type="project" value="dictyBase"/>
</dbReference>
<dbReference type="GO" id="GO:0046872">
    <property type="term" value="F:metal ion binding"/>
    <property type="evidence" value="ECO:0007669"/>
    <property type="project" value="UniProtKB-KW"/>
</dbReference>
<dbReference type="GO" id="GO:0019243">
    <property type="term" value="P:methylglyoxal catabolic process to D-lactate via S-lactoyl-glutathione"/>
    <property type="evidence" value="ECO:0000250"/>
    <property type="project" value="dictyBase"/>
</dbReference>
<dbReference type="CDD" id="cd07723">
    <property type="entry name" value="hydroxyacylglutathione_hydrolase_MBL-fold"/>
    <property type="match status" value="1"/>
</dbReference>
<dbReference type="Gene3D" id="3.60.15.10">
    <property type="entry name" value="Ribonuclease Z/Hydroxyacylglutathione hydrolase-like"/>
    <property type="match status" value="1"/>
</dbReference>
<dbReference type="HAMAP" id="MF_01374">
    <property type="entry name" value="Glyoxalase_2"/>
    <property type="match status" value="1"/>
</dbReference>
<dbReference type="InterPro" id="IPR035680">
    <property type="entry name" value="Clx_II_MBL"/>
</dbReference>
<dbReference type="InterPro" id="IPR032282">
    <property type="entry name" value="HAGH_C"/>
</dbReference>
<dbReference type="InterPro" id="IPR017782">
    <property type="entry name" value="Hydroxyacylglutathione_Hdrlase"/>
</dbReference>
<dbReference type="InterPro" id="IPR001279">
    <property type="entry name" value="Metallo-B-lactamas"/>
</dbReference>
<dbReference type="InterPro" id="IPR036866">
    <property type="entry name" value="RibonucZ/Hydroxyglut_hydro"/>
</dbReference>
<dbReference type="NCBIfam" id="TIGR03413">
    <property type="entry name" value="GSH_gloB"/>
    <property type="match status" value="1"/>
</dbReference>
<dbReference type="PANTHER" id="PTHR11935">
    <property type="entry name" value="BETA LACTAMASE DOMAIN"/>
    <property type="match status" value="1"/>
</dbReference>
<dbReference type="PANTHER" id="PTHR11935:SF94">
    <property type="entry name" value="TENZING NORGAY, ISOFORM C"/>
    <property type="match status" value="1"/>
</dbReference>
<dbReference type="Pfam" id="PF16123">
    <property type="entry name" value="HAGH_C"/>
    <property type="match status" value="1"/>
</dbReference>
<dbReference type="Pfam" id="PF00753">
    <property type="entry name" value="Lactamase_B"/>
    <property type="match status" value="1"/>
</dbReference>
<dbReference type="SMART" id="SM00849">
    <property type="entry name" value="Lactamase_B"/>
    <property type="match status" value="1"/>
</dbReference>
<dbReference type="SUPFAM" id="SSF56281">
    <property type="entry name" value="Metallo-hydrolase/oxidoreductase"/>
    <property type="match status" value="1"/>
</dbReference>